<proteinExistence type="inferred from homology"/>
<sequence length="378" mass="41709">MCSPPPYPPQGHHYPPSPHGSYYSPTPYGAAPSPPQSSSPHPRGYHSPSPSWGQLPPRPPQEAQSFGGGAPSNYRFQYSACTGRRKALLIGINYIGQPNQLRGCINDVANVSRYLNERCRYRREDMVILTDDQENPLSIPTKNNILRAMQWLVKDAQPNDSLFIHFSGHGGRTPDLDGDEEDGYDDVIYPVDYRTAGHIVDDEMHAIMVRPLRPGVRLTAIFDSCHSGTALDLPYVYSTQGVLKEPNLAKEAAMDLFSAISSYGQGDLTGMAKTAIGFFKKAAIGDSARQRTVMTKTSPADVVMFSGSKDTQTSADTFQDGEARGALSWAFVKTLQERPHQSYLQLLNSIRAELEGKYTQKPQLSCSHPLDVNLLFVM</sequence>
<feature type="propeptide" id="PRO_0000333634" evidence="2">
    <location>
        <begin position="1"/>
        <end status="unknown"/>
    </location>
</feature>
<feature type="chain" id="PRO_0000333635" description="Metacaspase-1B">
    <location>
        <begin status="unknown"/>
        <end position="378"/>
    </location>
</feature>
<feature type="region of interest" description="Disordered" evidence="3">
    <location>
        <begin position="1"/>
        <end position="70"/>
    </location>
</feature>
<feature type="compositionally biased region" description="Low complexity" evidence="3">
    <location>
        <begin position="10"/>
        <end position="29"/>
    </location>
</feature>
<feature type="active site" evidence="1">
    <location>
        <position position="169"/>
    </location>
</feature>
<feature type="active site" evidence="1">
    <location>
        <position position="225"/>
    </location>
</feature>
<protein>
    <recommendedName>
        <fullName>Metacaspase-1B</fullName>
        <ecNumber>3.4.22.-</ecNumber>
    </recommendedName>
</protein>
<accession>Q0CQL9</accession>
<organism>
    <name type="scientific">Aspergillus terreus (strain NIH 2624 / FGSC A1156)</name>
    <dbReference type="NCBI Taxonomy" id="341663"/>
    <lineage>
        <taxon>Eukaryota</taxon>
        <taxon>Fungi</taxon>
        <taxon>Dikarya</taxon>
        <taxon>Ascomycota</taxon>
        <taxon>Pezizomycotina</taxon>
        <taxon>Eurotiomycetes</taxon>
        <taxon>Eurotiomycetidae</taxon>
        <taxon>Eurotiales</taxon>
        <taxon>Aspergillaceae</taxon>
        <taxon>Aspergillus</taxon>
        <taxon>Aspergillus subgen. Circumdati</taxon>
    </lineage>
</organism>
<gene>
    <name type="primary">casB</name>
    <name type="ORF">ATEG_04015</name>
</gene>
<dbReference type="EC" id="3.4.22.-"/>
<dbReference type="EMBL" id="CH476598">
    <property type="protein sequence ID" value="EAU35817.1"/>
    <property type="molecule type" value="Genomic_DNA"/>
</dbReference>
<dbReference type="RefSeq" id="XP_001213193.1">
    <property type="nucleotide sequence ID" value="XM_001213193.1"/>
</dbReference>
<dbReference type="SMR" id="Q0CQL9"/>
<dbReference type="STRING" id="341663.Q0CQL9"/>
<dbReference type="EnsemblFungi" id="EAU35817">
    <property type="protein sequence ID" value="EAU35817"/>
    <property type="gene ID" value="ATEG_04015"/>
</dbReference>
<dbReference type="GeneID" id="4318443"/>
<dbReference type="VEuPathDB" id="FungiDB:ATEG_04015"/>
<dbReference type="eggNOG" id="KOG1546">
    <property type="taxonomic scope" value="Eukaryota"/>
</dbReference>
<dbReference type="HOGENOM" id="CLU_029389_3_1_1"/>
<dbReference type="OMA" id="EYGHHTP"/>
<dbReference type="OrthoDB" id="3223806at2759"/>
<dbReference type="Proteomes" id="UP000007963">
    <property type="component" value="Unassembled WGS sequence"/>
</dbReference>
<dbReference type="GO" id="GO:0005737">
    <property type="term" value="C:cytoplasm"/>
    <property type="evidence" value="ECO:0007669"/>
    <property type="project" value="TreeGrafter"/>
</dbReference>
<dbReference type="GO" id="GO:0004197">
    <property type="term" value="F:cysteine-type endopeptidase activity"/>
    <property type="evidence" value="ECO:0007669"/>
    <property type="project" value="InterPro"/>
</dbReference>
<dbReference type="GO" id="GO:0006915">
    <property type="term" value="P:apoptotic process"/>
    <property type="evidence" value="ECO:0007669"/>
    <property type="project" value="UniProtKB-KW"/>
</dbReference>
<dbReference type="GO" id="GO:0006508">
    <property type="term" value="P:proteolysis"/>
    <property type="evidence" value="ECO:0007669"/>
    <property type="project" value="UniProtKB-KW"/>
</dbReference>
<dbReference type="Gene3D" id="3.40.50.12660">
    <property type="match status" value="1"/>
</dbReference>
<dbReference type="InterPro" id="IPR029030">
    <property type="entry name" value="Caspase-like_dom_sf"/>
</dbReference>
<dbReference type="InterPro" id="IPR050452">
    <property type="entry name" value="Metacaspase"/>
</dbReference>
<dbReference type="InterPro" id="IPR011600">
    <property type="entry name" value="Pept_C14_caspase"/>
</dbReference>
<dbReference type="PANTHER" id="PTHR48104:SF23">
    <property type="entry name" value="METACASPASE (EUROFUNG)"/>
    <property type="match status" value="1"/>
</dbReference>
<dbReference type="PANTHER" id="PTHR48104">
    <property type="entry name" value="METACASPASE-4"/>
    <property type="match status" value="1"/>
</dbReference>
<dbReference type="Pfam" id="PF00656">
    <property type="entry name" value="Peptidase_C14"/>
    <property type="match status" value="1"/>
</dbReference>
<dbReference type="SUPFAM" id="SSF52129">
    <property type="entry name" value="Caspase-like"/>
    <property type="match status" value="1"/>
</dbReference>
<comment type="function">
    <text evidence="1">Involved in cell death (apoptosis).</text>
</comment>
<comment type="similarity">
    <text evidence="4">Belongs to the peptidase C14B family.</text>
</comment>
<evidence type="ECO:0000250" key="1"/>
<evidence type="ECO:0000255" key="2"/>
<evidence type="ECO:0000256" key="3">
    <source>
        <dbReference type="SAM" id="MobiDB-lite"/>
    </source>
</evidence>
<evidence type="ECO:0000305" key="4"/>
<reference key="1">
    <citation type="submission" date="2005-09" db="EMBL/GenBank/DDBJ databases">
        <title>Annotation of the Aspergillus terreus NIH2624 genome.</title>
        <authorList>
            <person name="Birren B.W."/>
            <person name="Lander E.S."/>
            <person name="Galagan J.E."/>
            <person name="Nusbaum C."/>
            <person name="Devon K."/>
            <person name="Henn M."/>
            <person name="Ma L.-J."/>
            <person name="Jaffe D.B."/>
            <person name="Butler J."/>
            <person name="Alvarez P."/>
            <person name="Gnerre S."/>
            <person name="Grabherr M."/>
            <person name="Kleber M."/>
            <person name="Mauceli E.W."/>
            <person name="Brockman W."/>
            <person name="Rounsley S."/>
            <person name="Young S.K."/>
            <person name="LaButti K."/>
            <person name="Pushparaj V."/>
            <person name="DeCaprio D."/>
            <person name="Crawford M."/>
            <person name="Koehrsen M."/>
            <person name="Engels R."/>
            <person name="Montgomery P."/>
            <person name="Pearson M."/>
            <person name="Howarth C."/>
            <person name="Larson L."/>
            <person name="Luoma S."/>
            <person name="White J."/>
            <person name="Alvarado L."/>
            <person name="Kodira C.D."/>
            <person name="Zeng Q."/>
            <person name="Oleary S."/>
            <person name="Yandava C."/>
            <person name="Denning D.W."/>
            <person name="Nierman W.C."/>
            <person name="Milne T."/>
            <person name="Madden K."/>
        </authorList>
    </citation>
    <scope>NUCLEOTIDE SEQUENCE [LARGE SCALE GENOMIC DNA]</scope>
    <source>
        <strain>NIH 2624 / FGSC A1156</strain>
    </source>
</reference>
<keyword id="KW-0053">Apoptosis</keyword>
<keyword id="KW-0378">Hydrolase</keyword>
<keyword id="KW-0645">Protease</keyword>
<keyword id="KW-1185">Reference proteome</keyword>
<keyword id="KW-0788">Thiol protease</keyword>
<keyword id="KW-0865">Zymogen</keyword>
<name>MCA1B_ASPTN</name>